<name>LEC2_LATOC</name>
<comment type="subunit">
    <text>Tetramer of two alpha and two beta chains.</text>
</comment>
<comment type="interaction">
    <interactant intactId="EBI-16210416">
        <id>P12307</id>
    </interactant>
    <interactant intactId="EBI-9019549">
        <id>P04122</id>
    </interactant>
    <organismsDiffer>false</organismsDiffer>
    <experiments>2</experiments>
</comment>
<comment type="similarity">
    <text evidence="1">Belongs to the leguminous lectin family.</text>
</comment>
<sequence length="53" mass="5929">ETSYTLNEVVPLKEFVPEWVRIGFSATTGAEFAAHEVLSWYFNSELSVTSSSN</sequence>
<accession>P12307</accession>
<keyword id="KW-0002">3D-structure</keyword>
<keyword id="KW-0903">Direct protein sequencing</keyword>
<keyword id="KW-0430">Lectin</keyword>
<keyword id="KW-0465">Mannose-binding</keyword>
<proteinExistence type="evidence at protein level"/>
<evidence type="ECO:0000305" key="1"/>
<evidence type="ECO:0007829" key="2">
    <source>
        <dbReference type="PDB" id="1LGC"/>
    </source>
</evidence>
<dbReference type="PIR" id="B25989">
    <property type="entry name" value="B25989"/>
</dbReference>
<dbReference type="PDB" id="1LGB">
    <property type="method" value="X-ray"/>
    <property type="resolution" value="3.30 A"/>
    <property type="chains" value="B=1-53"/>
</dbReference>
<dbReference type="PDB" id="1LGC">
    <property type="method" value="X-ray"/>
    <property type="resolution" value="2.80 A"/>
    <property type="chains" value="B/D/F=1-53"/>
</dbReference>
<dbReference type="PDBsum" id="1LGB"/>
<dbReference type="PDBsum" id="1LGC"/>
<dbReference type="SMR" id="P12307"/>
<dbReference type="DIP" id="DIP-6191N"/>
<dbReference type="IntAct" id="P12307">
    <property type="interactions" value="2"/>
</dbReference>
<dbReference type="EvolutionaryTrace" id="P12307"/>
<dbReference type="GO" id="GO:0005537">
    <property type="term" value="F:D-mannose binding"/>
    <property type="evidence" value="ECO:0007669"/>
    <property type="project" value="UniProtKB-KW"/>
</dbReference>
<dbReference type="Gene3D" id="2.60.120.200">
    <property type="match status" value="1"/>
</dbReference>
<dbReference type="InterPro" id="IPR013320">
    <property type="entry name" value="ConA-like_dom_sf"/>
</dbReference>
<dbReference type="InterPro" id="IPR000985">
    <property type="entry name" value="Lectin_LegA_CS"/>
</dbReference>
<dbReference type="InterPro" id="IPR001220">
    <property type="entry name" value="Legume_lectin_dom"/>
</dbReference>
<dbReference type="Pfam" id="PF00139">
    <property type="entry name" value="Lectin_legB"/>
    <property type="match status" value="1"/>
</dbReference>
<dbReference type="SUPFAM" id="SSF49899">
    <property type="entry name" value="Concanavalin A-like lectins/glucanases"/>
    <property type="match status" value="1"/>
</dbReference>
<dbReference type="PROSITE" id="PS00308">
    <property type="entry name" value="LECTIN_LEGUME_ALPHA"/>
    <property type="match status" value="1"/>
</dbReference>
<feature type="chain" id="PRO_0000105103" description="Mannose/glucose-specific lectin alpha 2 chain">
    <location>
        <begin position="1"/>
        <end position="53"/>
    </location>
</feature>
<feature type="strand" evidence="2">
    <location>
        <begin position="2"/>
        <end position="9"/>
    </location>
</feature>
<feature type="helix" evidence="2">
    <location>
        <begin position="12"/>
        <end position="14"/>
    </location>
</feature>
<feature type="strand" evidence="2">
    <location>
        <begin position="18"/>
        <end position="27"/>
    </location>
</feature>
<feature type="strand" evidence="2">
    <location>
        <begin position="29"/>
        <end position="31"/>
    </location>
</feature>
<feature type="strand" evidence="2">
    <location>
        <begin position="34"/>
        <end position="46"/>
    </location>
</feature>
<organism>
    <name type="scientific">Lathyrus ochrus</name>
    <name type="common">Cyprus-vetch</name>
    <name type="synonym">Pisum ochrus</name>
    <dbReference type="NCBI Taxonomy" id="3858"/>
    <lineage>
        <taxon>Eukaryota</taxon>
        <taxon>Viridiplantae</taxon>
        <taxon>Streptophyta</taxon>
        <taxon>Embryophyta</taxon>
        <taxon>Tracheophyta</taxon>
        <taxon>Spermatophyta</taxon>
        <taxon>Magnoliopsida</taxon>
        <taxon>eudicotyledons</taxon>
        <taxon>Gunneridae</taxon>
        <taxon>Pentapetalae</taxon>
        <taxon>rosids</taxon>
        <taxon>fabids</taxon>
        <taxon>Fabales</taxon>
        <taxon>Fabaceae</taxon>
        <taxon>Papilionoideae</taxon>
        <taxon>50 kb inversion clade</taxon>
        <taxon>NPAAA clade</taxon>
        <taxon>Hologalegina</taxon>
        <taxon>IRL clade</taxon>
        <taxon>Fabeae</taxon>
        <taxon>Lathyrus</taxon>
    </lineage>
</organism>
<protein>
    <recommendedName>
        <fullName>Mannose/glucose-specific lectin alpha 2 chain</fullName>
        <shortName>Lol II</shortName>
    </recommendedName>
</protein>
<reference key="1">
    <citation type="journal article" date="1984" name="FEBS Lett.">
        <title>The amino acid sequences of the alpha 1 and alpha 2 subunits of the isolectins from seeds of Lathyrus ochrus (L) DC.</title>
        <authorList>
            <person name="Richardson M."/>
            <person name="Rouge P."/>
            <person name="Sousa-Cavada B."/>
            <person name="Yarwood A."/>
        </authorList>
    </citation>
    <scope>PROTEIN SEQUENCE</scope>
</reference>
<reference key="2">
    <citation type="journal article" date="1992" name="J. Mol. Biol.">
        <title>Crystallization and preliminary X-ray diffraction study of Lathyrus ochrus isolectin II complexed to the human lactotransferrin N2 fragment.</title>
        <authorList>
            <person name="Bourne Y."/>
            <person name="Nesa M.P."/>
            <person name="Rouge P."/>
            <person name="Mazurier J."/>
            <person name="Legrand D."/>
            <person name="Spik G."/>
            <person name="Montreuil J."/>
            <person name="Cambillau C."/>
        </authorList>
    </citation>
    <scope>X-RAY CRYSTALLOGRAPHY (3.3 ANGSTROMS)</scope>
</reference>